<keyword id="KW-0963">Cytoplasm</keyword>
<keyword id="KW-1185">Reference proteome</keyword>
<keyword id="KW-0677">Repeat</keyword>
<keyword id="KW-0694">RNA-binding</keyword>
<keyword id="KW-0943">RNA-mediated gene silencing</keyword>
<keyword id="KW-0810">Translation regulation</keyword>
<gene>
    <name type="primary">tarbp2</name>
</gene>
<reference key="1">
    <citation type="submission" date="2003-07" db="EMBL/GenBank/DDBJ databases">
        <authorList>
            <consortium name="NIH - Zebrafish Gene Collection (ZGC) project"/>
        </authorList>
    </citation>
    <scope>NUCLEOTIDE SEQUENCE [LARGE SCALE MRNA]</scope>
    <source>
        <strain>AB</strain>
    </source>
</reference>
<sequence length="346" mass="37435">MNDEKSQDNGKRNSGYTSIEQMLAVNPGKTPISLLQEYGTRIGKTPVYDLLKAEGQAHQPNFTFRVSVGDINCTGHGPSKKAAKHKAAEAALKMLKGGMLGGIGGNGMEGDGFVGIEMEGECPQSEMKSSSSTQQAECNPVGALQELVVQKGWRLPEYTVTQESGPAHRKEFTMTCRVERFVEIGSGTSKKLAKRNAAAKMLSRIHDVPVDMRSSHEAEAEDDTFNMQIGGRLEGGKSKGLGCTWDSLRNSAGEKILQLRCHPLGQSDSIDSNFCSLLRELSEEQRFGVSYLDIEERSLSGLYQCLVELSTQPITVCHGFASSLDAARASAAHNALQYLKIMAGGK</sequence>
<organism>
    <name type="scientific">Danio rerio</name>
    <name type="common">Zebrafish</name>
    <name type="synonym">Brachydanio rerio</name>
    <dbReference type="NCBI Taxonomy" id="7955"/>
    <lineage>
        <taxon>Eukaryota</taxon>
        <taxon>Metazoa</taxon>
        <taxon>Chordata</taxon>
        <taxon>Craniata</taxon>
        <taxon>Vertebrata</taxon>
        <taxon>Euteleostomi</taxon>
        <taxon>Actinopterygii</taxon>
        <taxon>Neopterygii</taxon>
        <taxon>Teleostei</taxon>
        <taxon>Ostariophysi</taxon>
        <taxon>Cypriniformes</taxon>
        <taxon>Danionidae</taxon>
        <taxon>Danioninae</taxon>
        <taxon>Danio</taxon>
    </lineage>
</organism>
<name>TRBP2_DANRE</name>
<protein>
    <recommendedName>
        <fullName evidence="3">RISC-loading complex subunit tarbp2</fullName>
    </recommendedName>
</protein>
<accession>Q7SXR1</accession>
<evidence type="ECO:0000250" key="1">
    <source>
        <dbReference type="UniProtKB" id="P97473"/>
    </source>
</evidence>
<evidence type="ECO:0000250" key="2">
    <source>
        <dbReference type="UniProtKB" id="Q15633"/>
    </source>
</evidence>
<evidence type="ECO:0000255" key="3">
    <source>
        <dbReference type="HAMAP-Rule" id="MF_03034"/>
    </source>
</evidence>
<dbReference type="EMBL" id="BC055390">
    <property type="protein sequence ID" value="AAH55390.1"/>
    <property type="molecule type" value="mRNA"/>
</dbReference>
<dbReference type="RefSeq" id="NP_956291.1">
    <property type="nucleotide sequence ID" value="NM_199997.1"/>
</dbReference>
<dbReference type="SMR" id="Q7SXR1"/>
<dbReference type="FunCoup" id="Q7SXR1">
    <property type="interactions" value="1365"/>
</dbReference>
<dbReference type="STRING" id="7955.ENSDARP00000094231"/>
<dbReference type="PaxDb" id="7955-ENSDARP00000094231"/>
<dbReference type="GeneID" id="336141"/>
<dbReference type="KEGG" id="dre:336141"/>
<dbReference type="AGR" id="ZFIN:ZDB-GENE-030131-8085"/>
<dbReference type="CTD" id="6895"/>
<dbReference type="ZFIN" id="ZDB-GENE-030131-8085">
    <property type="gene designation" value="tarbp2"/>
</dbReference>
<dbReference type="eggNOG" id="KOG3732">
    <property type="taxonomic scope" value="Eukaryota"/>
</dbReference>
<dbReference type="InParanoid" id="Q7SXR1"/>
<dbReference type="OrthoDB" id="10056847at2759"/>
<dbReference type="PhylomeDB" id="Q7SXR1"/>
<dbReference type="Reactome" id="R-DRE-9833482">
    <property type="pathway name" value="PKR-mediated signaling"/>
</dbReference>
<dbReference type="PRO" id="PR:Q7SXR1"/>
<dbReference type="Proteomes" id="UP000000437">
    <property type="component" value="Chromosome 6"/>
</dbReference>
<dbReference type="GO" id="GO:0005737">
    <property type="term" value="C:cytoplasm"/>
    <property type="evidence" value="ECO:0000318"/>
    <property type="project" value="GO_Central"/>
</dbReference>
<dbReference type="GO" id="GO:0005634">
    <property type="term" value="C:nucleus"/>
    <property type="evidence" value="ECO:0000318"/>
    <property type="project" value="GO_Central"/>
</dbReference>
<dbReference type="GO" id="GO:0016442">
    <property type="term" value="C:RISC complex"/>
    <property type="evidence" value="ECO:0000250"/>
    <property type="project" value="UniProtKB"/>
</dbReference>
<dbReference type="GO" id="GO:0070578">
    <property type="term" value="C:RISC-loading complex"/>
    <property type="evidence" value="ECO:0000250"/>
    <property type="project" value="UniProtKB"/>
</dbReference>
<dbReference type="GO" id="GO:0003725">
    <property type="term" value="F:double-stranded RNA binding"/>
    <property type="evidence" value="ECO:0000318"/>
    <property type="project" value="GO_Central"/>
</dbReference>
<dbReference type="GO" id="GO:0035198">
    <property type="term" value="F:miRNA binding"/>
    <property type="evidence" value="ECO:0007669"/>
    <property type="project" value="UniProtKB-UniRule"/>
</dbReference>
<dbReference type="GO" id="GO:0070883">
    <property type="term" value="F:pre-miRNA binding"/>
    <property type="evidence" value="ECO:0007669"/>
    <property type="project" value="InterPro"/>
</dbReference>
<dbReference type="GO" id="GO:0042803">
    <property type="term" value="F:protein homodimerization activity"/>
    <property type="evidence" value="ECO:0007669"/>
    <property type="project" value="UniProtKB-UniRule"/>
</dbReference>
<dbReference type="GO" id="GO:0035197">
    <property type="term" value="F:siRNA binding"/>
    <property type="evidence" value="ECO:0000318"/>
    <property type="project" value="GO_Central"/>
</dbReference>
<dbReference type="GO" id="GO:0098795">
    <property type="term" value="P:global gene silencing by mRNA cleavage"/>
    <property type="evidence" value="ECO:0007669"/>
    <property type="project" value="UniProtKB-UniRule"/>
</dbReference>
<dbReference type="GO" id="GO:0031054">
    <property type="term" value="P:pre-miRNA processing"/>
    <property type="evidence" value="ECO:0007669"/>
    <property type="project" value="UniProtKB-UniRule"/>
</dbReference>
<dbReference type="GO" id="GO:1903798">
    <property type="term" value="P:regulation of miRNA processing"/>
    <property type="evidence" value="ECO:0007669"/>
    <property type="project" value="InterPro"/>
</dbReference>
<dbReference type="GO" id="GO:0070920">
    <property type="term" value="P:regulation of regulatory ncRNA processing"/>
    <property type="evidence" value="ECO:0000318"/>
    <property type="project" value="GO_Central"/>
</dbReference>
<dbReference type="GO" id="GO:0070921">
    <property type="term" value="P:regulation of siRNA processing"/>
    <property type="evidence" value="ECO:0007669"/>
    <property type="project" value="InterPro"/>
</dbReference>
<dbReference type="GO" id="GO:0006417">
    <property type="term" value="P:regulation of translation"/>
    <property type="evidence" value="ECO:0007669"/>
    <property type="project" value="UniProtKB-KW"/>
</dbReference>
<dbReference type="GO" id="GO:0046782">
    <property type="term" value="P:regulation of viral transcription"/>
    <property type="evidence" value="ECO:0007669"/>
    <property type="project" value="InterPro"/>
</dbReference>
<dbReference type="GO" id="GO:0070922">
    <property type="term" value="P:RISC complex assembly"/>
    <property type="evidence" value="ECO:0007669"/>
    <property type="project" value="UniProtKB-UniRule"/>
</dbReference>
<dbReference type="GO" id="GO:0030422">
    <property type="term" value="P:siRNA processing"/>
    <property type="evidence" value="ECO:0000318"/>
    <property type="project" value="GO_Central"/>
</dbReference>
<dbReference type="CDD" id="cd10844">
    <property type="entry name" value="DSRM_TARBP2_rpt2"/>
    <property type="match status" value="1"/>
</dbReference>
<dbReference type="CDD" id="cd19893">
    <property type="entry name" value="DSRM_TARBP2_rpt3"/>
    <property type="match status" value="1"/>
</dbReference>
<dbReference type="FunFam" id="3.30.160.20:FF:000005">
    <property type="entry name" value="Putative double-stranded RNA-specific adenosine deaminase"/>
    <property type="match status" value="1"/>
</dbReference>
<dbReference type="FunFam" id="3.30.160.20:FF:000019">
    <property type="entry name" value="RISC-loading complex subunit TARBP2"/>
    <property type="match status" value="1"/>
</dbReference>
<dbReference type="FunFam" id="3.30.160.20:FF:000018">
    <property type="entry name" value="RISC-loading complex subunit TARBP2 isoform X3"/>
    <property type="match status" value="1"/>
</dbReference>
<dbReference type="Gene3D" id="3.30.160.20">
    <property type="match status" value="3"/>
</dbReference>
<dbReference type="HAMAP" id="MF_03034">
    <property type="entry name" value="TRBP2"/>
    <property type="match status" value="1"/>
</dbReference>
<dbReference type="InterPro" id="IPR014720">
    <property type="entry name" value="dsRBD_dom"/>
</dbReference>
<dbReference type="InterPro" id="IPR051247">
    <property type="entry name" value="RLC_Component"/>
</dbReference>
<dbReference type="InterPro" id="IPR028605">
    <property type="entry name" value="TRBP2"/>
</dbReference>
<dbReference type="InterPro" id="IPR044470">
    <property type="entry name" value="TRBP2_DSRM_2"/>
</dbReference>
<dbReference type="InterPro" id="IPR044471">
    <property type="entry name" value="TRBP2_DSRM_3"/>
</dbReference>
<dbReference type="PANTHER" id="PTHR46205">
    <property type="entry name" value="LOQUACIOUS, ISOFORM B"/>
    <property type="match status" value="1"/>
</dbReference>
<dbReference type="PANTHER" id="PTHR46205:SF1">
    <property type="entry name" value="RISC-LOADING COMPLEX SUBUNIT TARBP2"/>
    <property type="match status" value="1"/>
</dbReference>
<dbReference type="Pfam" id="PF00035">
    <property type="entry name" value="dsrm"/>
    <property type="match status" value="2"/>
</dbReference>
<dbReference type="SMART" id="SM00358">
    <property type="entry name" value="DSRM"/>
    <property type="match status" value="3"/>
</dbReference>
<dbReference type="SUPFAM" id="SSF54768">
    <property type="entry name" value="dsRNA-binding domain-like"/>
    <property type="match status" value="3"/>
</dbReference>
<dbReference type="PROSITE" id="PS50137">
    <property type="entry name" value="DS_RBD"/>
    <property type="match status" value="3"/>
</dbReference>
<comment type="function">
    <text evidence="1 2 3">Required for formation of the RNA induced silencing complex (RISC). Component of the RISC loading complex (RLC), also known as the micro-RNA (miRNA) loading complex (miRLC), which is composed of dicer1, ago2 and tarbp2. Within the RLC/miRLC, dicer1 and tarbp2 are required to process precursor miRNAs (pre-miRNAs) to mature miRNAs and then load them onto ago2. ago2 bound to the mature miRNA constitutes the minimal RISC and may subsequently dissociate from dicer1 and tarbp2. May also play a role in the production of short interfering RNAs (siRNAs) from double-stranded RNA (dsRNA) by dicer1 (By similarity). Binds in vitro to the PRM1 3'-UTR (By similarity). Seems to act as a repressor of translation (By similarity). For some pre-miRNA substrates, may also alter the choice of cleavage site by DICER1 (By similarity).</text>
</comment>
<comment type="subunit">
    <text evidence="3">Self-associates. Component of the RISC loading complex (RLC), or micro-RNA (miRNA) loading complex (miRLC), which is composed of dicer1, ago2 and tarbp2. Note that the trimeric RLC/miRLC is also referred to as RISC.</text>
</comment>
<comment type="subcellular location">
    <subcellularLocation>
        <location evidence="3">Cytoplasm</location>
    </subcellularLocation>
</comment>
<comment type="similarity">
    <text evidence="3">Belongs to the TARBP2 family.</text>
</comment>
<feature type="chain" id="PRO_0000373972" description="RISC-loading complex subunit tarbp2">
    <location>
        <begin position="1"/>
        <end position="346"/>
    </location>
</feature>
<feature type="domain" description="DRBM 1" evidence="3">
    <location>
        <begin position="30"/>
        <end position="97"/>
    </location>
</feature>
<feature type="domain" description="DRBM 2" evidence="3">
    <location>
        <begin position="139"/>
        <end position="207"/>
    </location>
</feature>
<feature type="domain" description="DRBM 3" evidence="3">
    <location>
        <begin position="273"/>
        <end position="341"/>
    </location>
</feature>
<proteinExistence type="evidence at transcript level"/>